<proteinExistence type="evidence at protein level"/>
<comment type="function">
    <text evidence="1 2 3">Antitoxin component of a type II toxin-antitoxin (TA) system. Upon expression in E.coli and M.smegmatis neutralizes the effect of cognate toxin VapC11.</text>
</comment>
<comment type="induction">
    <text evidence="2">Induced during infection of mouse macrophages.</text>
</comment>
<protein>
    <recommendedName>
        <fullName>Antitoxin VapB11</fullName>
    </recommendedName>
</protein>
<sequence>MYRWCMSRTNIDIDDELAAEVMRRFGLTTKRAAVDLALRRLVGSPLSREFLLGLEGVGWEGDLDDLRSDRPD</sequence>
<gene>
    <name type="primary">vapB11</name>
    <name type="ordered locus">Rv1560</name>
    <name type="ORF">MTCY48.05c</name>
</gene>
<reference key="1">
    <citation type="journal article" date="1998" name="Nature">
        <title>Deciphering the biology of Mycobacterium tuberculosis from the complete genome sequence.</title>
        <authorList>
            <person name="Cole S.T."/>
            <person name="Brosch R."/>
            <person name="Parkhill J."/>
            <person name="Garnier T."/>
            <person name="Churcher C.M."/>
            <person name="Harris D.E."/>
            <person name="Gordon S.V."/>
            <person name="Eiglmeier K."/>
            <person name="Gas S."/>
            <person name="Barry C.E. III"/>
            <person name="Tekaia F."/>
            <person name="Badcock K."/>
            <person name="Basham D."/>
            <person name="Brown D."/>
            <person name="Chillingworth T."/>
            <person name="Connor R."/>
            <person name="Davies R.M."/>
            <person name="Devlin K."/>
            <person name="Feltwell T."/>
            <person name="Gentles S."/>
            <person name="Hamlin N."/>
            <person name="Holroyd S."/>
            <person name="Hornsby T."/>
            <person name="Jagels K."/>
            <person name="Krogh A."/>
            <person name="McLean J."/>
            <person name="Moule S."/>
            <person name="Murphy L.D."/>
            <person name="Oliver S."/>
            <person name="Osborne J."/>
            <person name="Quail M.A."/>
            <person name="Rajandream M.A."/>
            <person name="Rogers J."/>
            <person name="Rutter S."/>
            <person name="Seeger K."/>
            <person name="Skelton S."/>
            <person name="Squares S."/>
            <person name="Squares R."/>
            <person name="Sulston J.E."/>
            <person name="Taylor K."/>
            <person name="Whitehead S."/>
            <person name="Barrell B.G."/>
        </authorList>
    </citation>
    <scope>NUCLEOTIDE SEQUENCE [LARGE SCALE GENOMIC DNA]</scope>
    <source>
        <strain>ATCC 25618 / H37Rv</strain>
    </source>
</reference>
<reference key="2">
    <citation type="journal article" date="2005" name="Nucleic Acids Res.">
        <title>Toxin-antitoxin loci are highly abundant in free-living but lost from host-associated prokaryotes.</title>
        <authorList>
            <person name="Pandey D.P."/>
            <person name="Gerdes K."/>
        </authorList>
    </citation>
    <scope>POSSIBLE FUNCTION</scope>
    <source>
        <strain>ATCC 25618 / H37Rv</strain>
    </source>
</reference>
<reference key="3">
    <citation type="journal article" date="2009" name="FEMS Microbiol. Lett.">
        <title>Killing activity and rescue function of genome-wide toxin-antitoxin loci of Mycobacterium tuberculosis.</title>
        <authorList>
            <person name="Gupta A."/>
        </authorList>
    </citation>
    <scope>EXPRESSION IN E.COLI</scope>
    <scope>FUNCTION AS AN ANTITOXIN</scope>
    <source>
        <strain>ATCC 25618 / H37Rv</strain>
    </source>
</reference>
<reference key="4">
    <citation type="journal article" date="2009" name="PLoS Genet.">
        <title>Comprehensive functional analysis of Mycobacterium tuberculosis toxin-antitoxin systems: implications for pathogenesis, stress responses, and evolution.</title>
        <authorList>
            <person name="Ramage H.R."/>
            <person name="Connolly L.E."/>
            <person name="Cox J.S."/>
        </authorList>
    </citation>
    <scope>EXPRESSION IN M.SMEGMATIS</scope>
    <scope>FUNCTION AS AN ANTITOXIN</scope>
    <scope>INDUCTION DURING MACROPHAGE INFECTION</scope>
    <source>
        <strain>ATCC 35801 / TMC 107 / Erdman</strain>
    </source>
</reference>
<name>VPB11_MYCTU</name>
<keyword id="KW-0002">3D-structure</keyword>
<keyword id="KW-1185">Reference proteome</keyword>
<keyword id="KW-1277">Toxin-antitoxin system</keyword>
<accession>P9WLU3</accession>
<accession>L0T9T0</accession>
<accession>P64877</accession>
<accession>Q10771</accession>
<evidence type="ECO:0000269" key="1">
    <source>
    </source>
</evidence>
<evidence type="ECO:0000269" key="2">
    <source>
    </source>
</evidence>
<evidence type="ECO:0000305" key="3">
    <source>
    </source>
</evidence>
<evidence type="ECO:0007829" key="4">
    <source>
        <dbReference type="PDB" id="6A7V"/>
    </source>
</evidence>
<dbReference type="EMBL" id="AL123456">
    <property type="protein sequence ID" value="CCP44324.1"/>
    <property type="molecule type" value="Genomic_DNA"/>
</dbReference>
<dbReference type="PIR" id="E70763">
    <property type="entry name" value="E70763"/>
</dbReference>
<dbReference type="RefSeq" id="NP_216076.1">
    <property type="nucleotide sequence ID" value="NC_000962.3"/>
</dbReference>
<dbReference type="RefSeq" id="WP_003407785.1">
    <property type="nucleotide sequence ID" value="NC_000962.3"/>
</dbReference>
<dbReference type="PDB" id="6A7V">
    <property type="method" value="X-ray"/>
    <property type="resolution" value="1.67 A"/>
    <property type="chains" value="D/H/K/U=7-68"/>
</dbReference>
<dbReference type="PDBsum" id="6A7V"/>
<dbReference type="SMR" id="P9WLU3"/>
<dbReference type="STRING" id="83332.Rv1560"/>
<dbReference type="PaxDb" id="83332-Rv1560"/>
<dbReference type="DNASU" id="886359"/>
<dbReference type="GeneID" id="886359"/>
<dbReference type="KEGG" id="mtu:Rv1560"/>
<dbReference type="KEGG" id="mtv:RVBD_1560"/>
<dbReference type="TubercuList" id="Rv1560"/>
<dbReference type="eggNOG" id="COG5450">
    <property type="taxonomic scope" value="Bacteria"/>
</dbReference>
<dbReference type="InParanoid" id="P9WLU3"/>
<dbReference type="OrthoDB" id="4563074at2"/>
<dbReference type="PhylomeDB" id="P9WLU3"/>
<dbReference type="Proteomes" id="UP000001584">
    <property type="component" value="Chromosome"/>
</dbReference>
<dbReference type="GO" id="GO:0097351">
    <property type="term" value="F:toxin sequestering activity"/>
    <property type="evidence" value="ECO:0000353"/>
    <property type="project" value="MTBBASE"/>
</dbReference>
<dbReference type="GO" id="GO:0098754">
    <property type="term" value="P:detoxification"/>
    <property type="evidence" value="ECO:0000315"/>
    <property type="project" value="UniProtKB"/>
</dbReference>
<dbReference type="GO" id="GO:0045727">
    <property type="term" value="P:positive regulation of translation"/>
    <property type="evidence" value="ECO:0000315"/>
    <property type="project" value="MTBBASE"/>
</dbReference>
<dbReference type="GO" id="GO:0075136">
    <property type="term" value="P:response to host"/>
    <property type="evidence" value="ECO:0000270"/>
    <property type="project" value="MTBBASE"/>
</dbReference>
<dbReference type="InterPro" id="IPR019239">
    <property type="entry name" value="VapB_antitoxin"/>
</dbReference>
<dbReference type="Pfam" id="PF09957">
    <property type="entry name" value="VapB_antitoxin"/>
    <property type="match status" value="1"/>
</dbReference>
<organism>
    <name type="scientific">Mycobacterium tuberculosis (strain ATCC 25618 / H37Rv)</name>
    <dbReference type="NCBI Taxonomy" id="83332"/>
    <lineage>
        <taxon>Bacteria</taxon>
        <taxon>Bacillati</taxon>
        <taxon>Actinomycetota</taxon>
        <taxon>Actinomycetes</taxon>
        <taxon>Mycobacteriales</taxon>
        <taxon>Mycobacteriaceae</taxon>
        <taxon>Mycobacterium</taxon>
        <taxon>Mycobacterium tuberculosis complex</taxon>
    </lineage>
</organism>
<feature type="chain" id="PRO_0000103881" description="Antitoxin VapB11">
    <location>
        <begin position="1"/>
        <end position="72"/>
    </location>
</feature>
<feature type="strand" evidence="4">
    <location>
        <begin position="8"/>
        <end position="12"/>
    </location>
</feature>
<feature type="helix" evidence="4">
    <location>
        <begin position="15"/>
        <end position="25"/>
    </location>
</feature>
<feature type="helix" evidence="4">
    <location>
        <begin position="30"/>
        <end position="42"/>
    </location>
</feature>
<feature type="helix" evidence="4">
    <location>
        <begin position="48"/>
        <end position="53"/>
    </location>
</feature>
<feature type="turn" evidence="4">
    <location>
        <begin position="54"/>
        <end position="56"/>
    </location>
</feature>
<feature type="helix" evidence="4">
    <location>
        <begin position="63"/>
        <end position="66"/>
    </location>
</feature>